<comment type="function">
    <text evidence="1">One of the components of the core complex of photosystem II (PSII), required for its stability and/or assembly. PSII is a light-driven water:plastoquinone oxidoreductase that uses light energy to abstract electrons from H(2)O, generating O(2) and a proton gradient subsequently used for ATP formation. It consists of a core antenna complex that captures photons, and an electron transfer chain that converts photonic excitation into a charge separation.</text>
</comment>
<comment type="subunit">
    <text evidence="1">PSII is composed of 1 copy each of membrane proteins PsbA, PsbB, PsbC, PsbD, PsbE, PsbF, PsbH, PsbI, PsbJ, PsbK, PsbL, PsbM, PsbT, PsbX, PsbY, PsbZ, Psb30/Ycf12, at least 3 peripheral proteins of the oxygen-evolving complex and a large number of cofactors. It forms dimeric complexes.</text>
</comment>
<comment type="subcellular location">
    <subcellularLocation>
        <location evidence="1">Plastid</location>
        <location evidence="1">Chloroplast thylakoid membrane</location>
        <topology evidence="1">Single-pass membrane protein</topology>
    </subcellularLocation>
</comment>
<comment type="similarity">
    <text evidence="1">Belongs to the PsbH family.</text>
</comment>
<feature type="chain" id="PRO_0000070510" description="Photosystem II reaction center protein H">
    <location>
        <begin position="1"/>
        <end position="67"/>
    </location>
</feature>
<feature type="transmembrane region" description="Helical" evidence="1">
    <location>
        <begin position="29"/>
        <end position="49"/>
    </location>
</feature>
<gene>
    <name evidence="1" type="primary">psbH</name>
</gene>
<keyword id="KW-0150">Chloroplast</keyword>
<keyword id="KW-0472">Membrane</keyword>
<keyword id="KW-0602">Photosynthesis</keyword>
<keyword id="KW-0604">Photosystem II</keyword>
<keyword id="KW-0934">Plastid</keyword>
<keyword id="KW-0793">Thylakoid</keyword>
<keyword id="KW-0812">Transmembrane</keyword>
<keyword id="KW-1133">Transmembrane helix</keyword>
<sequence>MALRTRLGELLRPLNSEYGKVAPGWGTTPAMGFVMLLFFLFLLIILQIYNSSLILENVDVDWASLGN</sequence>
<geneLocation type="chloroplast"/>
<proteinExistence type="inferred from homology"/>
<evidence type="ECO:0000255" key="1">
    <source>
        <dbReference type="HAMAP-Rule" id="MF_00752"/>
    </source>
</evidence>
<dbReference type="EMBL" id="AF041468">
    <property type="protein sequence ID" value="AAC35736.1"/>
    <property type="molecule type" value="Genomic_DNA"/>
</dbReference>
<dbReference type="RefSeq" id="NP_050802.1">
    <property type="nucleotide sequence ID" value="NC_000926.1"/>
</dbReference>
<dbReference type="SMR" id="O78514"/>
<dbReference type="GeneID" id="857110"/>
<dbReference type="HOGENOM" id="CLU_190203_0_0_1"/>
<dbReference type="OMA" id="RTWLGDI"/>
<dbReference type="GO" id="GO:0009535">
    <property type="term" value="C:chloroplast thylakoid membrane"/>
    <property type="evidence" value="ECO:0007669"/>
    <property type="project" value="UniProtKB-SubCell"/>
</dbReference>
<dbReference type="GO" id="GO:0009523">
    <property type="term" value="C:photosystem II"/>
    <property type="evidence" value="ECO:0007669"/>
    <property type="project" value="UniProtKB-KW"/>
</dbReference>
<dbReference type="GO" id="GO:0042301">
    <property type="term" value="F:phosphate ion binding"/>
    <property type="evidence" value="ECO:0007669"/>
    <property type="project" value="InterPro"/>
</dbReference>
<dbReference type="GO" id="GO:0015979">
    <property type="term" value="P:photosynthesis"/>
    <property type="evidence" value="ECO:0007669"/>
    <property type="project" value="UniProtKB-UniRule"/>
</dbReference>
<dbReference type="GO" id="GO:0050821">
    <property type="term" value="P:protein stabilization"/>
    <property type="evidence" value="ECO:0007669"/>
    <property type="project" value="InterPro"/>
</dbReference>
<dbReference type="Gene3D" id="1.20.5.880">
    <property type="entry name" value="Photosystem II reaction center protein H"/>
    <property type="match status" value="1"/>
</dbReference>
<dbReference type="HAMAP" id="MF_00752">
    <property type="entry name" value="PSII_PsbH"/>
    <property type="match status" value="1"/>
</dbReference>
<dbReference type="InterPro" id="IPR001056">
    <property type="entry name" value="PSII_PsbH"/>
</dbReference>
<dbReference type="InterPro" id="IPR036863">
    <property type="entry name" value="PSII_PsbH_sf"/>
</dbReference>
<dbReference type="NCBIfam" id="NF002728">
    <property type="entry name" value="PRK02624.1"/>
    <property type="match status" value="1"/>
</dbReference>
<dbReference type="PANTHER" id="PTHR34469">
    <property type="entry name" value="PHOTOSYSTEM II REACTION CENTER PROTEIN H"/>
    <property type="match status" value="1"/>
</dbReference>
<dbReference type="PANTHER" id="PTHR34469:SF4">
    <property type="entry name" value="PHOTOSYSTEM II REACTION CENTER PROTEIN H"/>
    <property type="match status" value="1"/>
</dbReference>
<dbReference type="Pfam" id="PF00737">
    <property type="entry name" value="PsbH"/>
    <property type="match status" value="1"/>
</dbReference>
<dbReference type="SUPFAM" id="SSF161025">
    <property type="entry name" value="Photosystem II 10 kDa phosphoprotein PsbH"/>
    <property type="match status" value="1"/>
</dbReference>
<organism>
    <name type="scientific">Guillardia theta</name>
    <name type="common">Cryptophyte</name>
    <name type="synonym">Cryptomonas phi</name>
    <dbReference type="NCBI Taxonomy" id="55529"/>
    <lineage>
        <taxon>Eukaryota</taxon>
        <taxon>Cryptophyceae</taxon>
        <taxon>Pyrenomonadales</taxon>
        <taxon>Geminigeraceae</taxon>
        <taxon>Guillardia</taxon>
    </lineage>
</organism>
<accession>O78514</accession>
<reference key="1">
    <citation type="journal article" date="1999" name="J. Mol. Evol.">
        <title>The plastid genome of the cryptophyte alga, Guillardia theta: complete sequence and conserved synteny groups confirm its common ancestry with red algae.</title>
        <authorList>
            <person name="Douglas S.E."/>
            <person name="Penny S.L."/>
        </authorList>
    </citation>
    <scope>NUCLEOTIDE SEQUENCE [LARGE SCALE GENOMIC DNA]</scope>
</reference>
<protein>
    <recommendedName>
        <fullName evidence="1">Photosystem II reaction center protein H</fullName>
        <shortName evidence="1">PSII-H</shortName>
    </recommendedName>
</protein>
<name>PSBH_GUITH</name>